<keyword id="KW-0007">Acetylation</keyword>
<keyword id="KW-0963">Cytoplasm</keyword>
<keyword id="KW-0206">Cytoskeleton</keyword>
<keyword id="KW-0342">GTP-binding</keyword>
<keyword id="KW-0378">Hydrolase</keyword>
<keyword id="KW-0460">Magnesium</keyword>
<keyword id="KW-0479">Metal-binding</keyword>
<keyword id="KW-0493">Microtubule</keyword>
<keyword id="KW-0547">Nucleotide-binding</keyword>
<keyword id="KW-1185">Reference proteome</keyword>
<evidence type="ECO:0000250" key="1"/>
<evidence type="ECO:0000250" key="2">
    <source>
        <dbReference type="UniProtKB" id="P68363"/>
    </source>
</evidence>
<evidence type="ECO:0000305" key="3"/>
<reference key="1">
    <citation type="journal article" date="1990" name="Plant Mol. Biol.">
        <title>A tandem of alpha-tubulin genes preferentially expressed in radicular tissues from Zea mays.</title>
        <authorList>
            <person name="Montoliu L."/>
            <person name="Rigau J."/>
            <person name="Puigdomenech P."/>
        </authorList>
    </citation>
    <scope>NUCLEOTIDE SEQUENCE [GENOMIC DNA]</scope>
    <source>
        <strain>cv. Wisconsin 64A</strain>
        <tissue>Root</tissue>
    </source>
</reference>
<reference key="2">
    <citation type="journal article" date="1990" name="FEBS Lett.">
        <title>Multiple polyadenylation sites are active in the alpha 1-tubulin gene from Zea mays.</title>
        <authorList>
            <person name="Montoliu L."/>
            <person name="Rigau J."/>
            <person name="Puigdomenech P."/>
        </authorList>
    </citation>
    <scope>NUCLEOTIDE SEQUENCE [GENOMIC DNA] OF 430-451</scope>
</reference>
<organism>
    <name type="scientific">Zea mays</name>
    <name type="common">Maize</name>
    <dbReference type="NCBI Taxonomy" id="4577"/>
    <lineage>
        <taxon>Eukaryota</taxon>
        <taxon>Viridiplantae</taxon>
        <taxon>Streptophyta</taxon>
        <taxon>Embryophyta</taxon>
        <taxon>Tracheophyta</taxon>
        <taxon>Spermatophyta</taxon>
        <taxon>Magnoliopsida</taxon>
        <taxon>Liliopsida</taxon>
        <taxon>Poales</taxon>
        <taxon>Poaceae</taxon>
        <taxon>PACMAD clade</taxon>
        <taxon>Panicoideae</taxon>
        <taxon>Andropogonodae</taxon>
        <taxon>Andropogoneae</taxon>
        <taxon>Tripsacinae</taxon>
        <taxon>Zea</taxon>
    </lineage>
</organism>
<sequence>MRECISIHIGQAGIQVGNACWELYCLEHGIQADGQMPGDKTIGGGDDAFNTFFSETGAGKHVPRAVFVDLEPTVIDEVRTGTYRQLFHPEQLISGKEDAANNFARGHYTIGKEIVDLCLDRIRKLADNCTGLQGFLVFNAVGGGTGSGLGSLLLERLSVDYGKKSKLGFTVYPSPQVSTSVVEPYNSVLSTHSLLEHTDVAILLDNEAIYDICRRSLDIERPTYTNLNRLVSQVISSLTASLRFDGALNVDVNEFQTNLVPYPRIHFMLSSYAPVISAEKAYHEQLSVAEITNSAFEPSSMMAKCDPRHGKYMACCLMYRGDVVPKDVNAAVATIKTKRTIQFVDWCPTGFKCGINYQPPSVVPGGDLAKVQRAVCMISNSTSVVEVFSRIDHKFDLMYAKRAFVHWYVGEGMEEGEFSEAREDLAALEKDYEEVGAEFDEGEDGDEGDEY</sequence>
<protein>
    <recommendedName>
        <fullName>Tubulin alpha-1 chain</fullName>
        <ecNumber evidence="2">3.6.5.-</ecNumber>
    </recommendedName>
    <alternativeName>
        <fullName>Alpha-1-tubulin</fullName>
    </alternativeName>
</protein>
<comment type="function">
    <text>Tubulin is the major constituent of microtubules, a cylinder consisting of laterally associated linear protofilaments composed of alpha- and beta-tubulin heterodimers. Microtubules grow by the addition of GTP-tubulin dimers to the microtubule end, where a stabilizing cap forms. Below the cap, tubulin dimers are in GDP-bound state, owing to GTPase activity of alpha-tubulin.</text>
</comment>
<comment type="catalytic activity">
    <reaction evidence="2">
        <text>GTP + H2O = GDP + phosphate + H(+)</text>
        <dbReference type="Rhea" id="RHEA:19669"/>
        <dbReference type="ChEBI" id="CHEBI:15377"/>
        <dbReference type="ChEBI" id="CHEBI:15378"/>
        <dbReference type="ChEBI" id="CHEBI:37565"/>
        <dbReference type="ChEBI" id="CHEBI:43474"/>
        <dbReference type="ChEBI" id="CHEBI:58189"/>
    </reaction>
    <physiologicalReaction direction="left-to-right" evidence="2">
        <dbReference type="Rhea" id="RHEA:19670"/>
    </physiologicalReaction>
</comment>
<comment type="cofactor">
    <cofactor evidence="2">
        <name>Mg(2+)</name>
        <dbReference type="ChEBI" id="CHEBI:18420"/>
    </cofactor>
</comment>
<comment type="subunit">
    <text>Dimer of alpha and beta chains. A typical microtubule is a hollow water-filled tube with an outer diameter of 25 nm and an inner diameter of 15 nM. Alpha-beta heterodimers associate head-to-tail to form protofilaments running lengthwise along the microtubule wall with the beta-tubulin subunit facing the microtubule plus end conferring a structural polarity. Microtubules usually have 13 protofilaments but different protofilament numbers can be found in some organisms and specialized cells.</text>
</comment>
<comment type="subcellular location">
    <subcellularLocation>
        <location>Cytoplasm</location>
        <location>Cytoskeleton</location>
    </subcellularLocation>
</comment>
<comment type="PTM">
    <text evidence="1">Undergoes a tyrosination/detyrosination cycle, the cyclic removal and re-addition of a C-terminal tyrosine residue by the enzymes tubulin tyrosine carboxypeptidase (TTCP) and tubulin tyrosine ligase (TTL), respectively.</text>
</comment>
<comment type="PTM">
    <text evidence="1">Acetylation of alpha chains at Lys-40 stabilizes microtubules and affects affinity and processivity of microtubule motors. This modification has a role in multiple cellular functions, ranging from cell motility, cell cycle progression or cell differentiation to intracellular trafficking and signaling (By similarity).</text>
</comment>
<comment type="similarity">
    <text evidence="3">Belongs to the tubulin family.</text>
</comment>
<accession>P14640</accession>
<name>TBA1_MAIZE</name>
<feature type="chain" id="PRO_0000048188" description="Tubulin alpha-1 chain">
    <location>
        <begin position="1"/>
        <end position="451"/>
    </location>
</feature>
<feature type="active site" evidence="2">
    <location>
        <position position="254"/>
    </location>
</feature>
<feature type="binding site" evidence="2">
    <location>
        <position position="11"/>
    </location>
    <ligand>
        <name>GTP</name>
        <dbReference type="ChEBI" id="CHEBI:37565"/>
    </ligand>
</feature>
<feature type="binding site" evidence="2">
    <location>
        <position position="71"/>
    </location>
    <ligand>
        <name>GTP</name>
        <dbReference type="ChEBI" id="CHEBI:37565"/>
    </ligand>
</feature>
<feature type="binding site" evidence="2">
    <location>
        <position position="71"/>
    </location>
    <ligand>
        <name>Mg(2+)</name>
        <dbReference type="ChEBI" id="CHEBI:18420"/>
    </ligand>
</feature>
<feature type="binding site" evidence="2">
    <location>
        <position position="144"/>
    </location>
    <ligand>
        <name>GTP</name>
        <dbReference type="ChEBI" id="CHEBI:37565"/>
    </ligand>
</feature>
<feature type="binding site" evidence="2">
    <location>
        <position position="145"/>
    </location>
    <ligand>
        <name>GTP</name>
        <dbReference type="ChEBI" id="CHEBI:37565"/>
    </ligand>
</feature>
<feature type="binding site" evidence="2">
    <location>
        <position position="179"/>
    </location>
    <ligand>
        <name>GTP</name>
        <dbReference type="ChEBI" id="CHEBI:37565"/>
    </ligand>
</feature>
<feature type="binding site" evidence="2">
    <location>
        <position position="206"/>
    </location>
    <ligand>
        <name>GTP</name>
        <dbReference type="ChEBI" id="CHEBI:37565"/>
    </ligand>
</feature>
<feature type="binding site" evidence="2">
    <location>
        <position position="228"/>
    </location>
    <ligand>
        <name>GTP</name>
        <dbReference type="ChEBI" id="CHEBI:37565"/>
    </ligand>
</feature>
<feature type="site" description="Involved in polymerization">
    <location>
        <position position="451"/>
    </location>
</feature>
<feature type="modified residue" description="N6-acetyllysine" evidence="1">
    <location>
        <position position="40"/>
    </location>
</feature>
<proteinExistence type="inferred from homology"/>
<gene>
    <name type="primary">TUBA1</name>
    <name type="synonym">TUA1</name>
</gene>
<dbReference type="EC" id="3.6.5.-" evidence="2"/>
<dbReference type="EMBL" id="X15704">
    <property type="protein sequence ID" value="CAA33734.1"/>
    <property type="molecule type" value="Genomic_DNA"/>
</dbReference>
<dbReference type="PIR" id="S15773">
    <property type="entry name" value="S15773"/>
</dbReference>
<dbReference type="PIR" id="S28980">
    <property type="entry name" value="S28980"/>
</dbReference>
<dbReference type="RefSeq" id="NP_001295436.1">
    <property type="nucleotide sequence ID" value="NM_001308507.1"/>
</dbReference>
<dbReference type="SMR" id="P14640"/>
<dbReference type="FunCoup" id="P14640">
    <property type="interactions" value="1993"/>
</dbReference>
<dbReference type="STRING" id="4577.P14640"/>
<dbReference type="PaxDb" id="4577-GRMZM2G152466_P01"/>
<dbReference type="EnsemblPlants" id="Zm00001eb055850_T001">
    <property type="protein sequence ID" value="Zm00001eb055850_P001"/>
    <property type="gene ID" value="Zm00001eb055850"/>
</dbReference>
<dbReference type="GeneID" id="100037751"/>
<dbReference type="Gramene" id="Zm00001eb055850_T001">
    <property type="protein sequence ID" value="Zm00001eb055850_P001"/>
    <property type="gene ID" value="Zm00001eb055850"/>
</dbReference>
<dbReference type="KEGG" id="zma:100037751"/>
<dbReference type="MaizeGDB" id="17141"/>
<dbReference type="eggNOG" id="KOG1376">
    <property type="taxonomic scope" value="Eukaryota"/>
</dbReference>
<dbReference type="InParanoid" id="P14640"/>
<dbReference type="OMA" id="YMASCIL"/>
<dbReference type="OrthoDB" id="1853138at2759"/>
<dbReference type="Proteomes" id="UP000007305">
    <property type="component" value="Chromosome 1"/>
</dbReference>
<dbReference type="ExpressionAtlas" id="P14640">
    <property type="expression patterns" value="baseline and differential"/>
</dbReference>
<dbReference type="GO" id="GO:0005737">
    <property type="term" value="C:cytoplasm"/>
    <property type="evidence" value="ECO:0000318"/>
    <property type="project" value="GO_Central"/>
</dbReference>
<dbReference type="GO" id="GO:0005874">
    <property type="term" value="C:microtubule"/>
    <property type="evidence" value="ECO:0000318"/>
    <property type="project" value="GO_Central"/>
</dbReference>
<dbReference type="GO" id="GO:0005525">
    <property type="term" value="F:GTP binding"/>
    <property type="evidence" value="ECO:0000318"/>
    <property type="project" value="GO_Central"/>
</dbReference>
<dbReference type="GO" id="GO:0016787">
    <property type="term" value="F:hydrolase activity"/>
    <property type="evidence" value="ECO:0007669"/>
    <property type="project" value="UniProtKB-KW"/>
</dbReference>
<dbReference type="GO" id="GO:0046872">
    <property type="term" value="F:metal ion binding"/>
    <property type="evidence" value="ECO:0007669"/>
    <property type="project" value="UniProtKB-KW"/>
</dbReference>
<dbReference type="GO" id="GO:0005200">
    <property type="term" value="F:structural constituent of cytoskeleton"/>
    <property type="evidence" value="ECO:0000318"/>
    <property type="project" value="GO_Central"/>
</dbReference>
<dbReference type="GO" id="GO:0000226">
    <property type="term" value="P:microtubule cytoskeleton organization"/>
    <property type="evidence" value="ECO:0000318"/>
    <property type="project" value="GO_Central"/>
</dbReference>
<dbReference type="GO" id="GO:0000278">
    <property type="term" value="P:mitotic cell cycle"/>
    <property type="evidence" value="ECO:0000318"/>
    <property type="project" value="GO_Central"/>
</dbReference>
<dbReference type="CDD" id="cd02186">
    <property type="entry name" value="alpha_tubulin"/>
    <property type="match status" value="1"/>
</dbReference>
<dbReference type="FunFam" id="1.10.287.600:FF:000001">
    <property type="entry name" value="Tubulin alpha chain"/>
    <property type="match status" value="1"/>
</dbReference>
<dbReference type="FunFam" id="3.30.1330.20:FF:000001">
    <property type="entry name" value="Tubulin alpha chain"/>
    <property type="match status" value="1"/>
</dbReference>
<dbReference type="FunFam" id="3.40.50.1440:FF:000004">
    <property type="entry name" value="Tubulin alpha chain"/>
    <property type="match status" value="1"/>
</dbReference>
<dbReference type="Gene3D" id="1.10.287.600">
    <property type="entry name" value="Helix hairpin bin"/>
    <property type="match status" value="1"/>
</dbReference>
<dbReference type="Gene3D" id="3.30.1330.20">
    <property type="entry name" value="Tubulin/FtsZ, C-terminal domain"/>
    <property type="match status" value="1"/>
</dbReference>
<dbReference type="Gene3D" id="3.40.50.1440">
    <property type="entry name" value="Tubulin/FtsZ, GTPase domain"/>
    <property type="match status" value="1"/>
</dbReference>
<dbReference type="InterPro" id="IPR002452">
    <property type="entry name" value="Alpha_tubulin"/>
</dbReference>
<dbReference type="InterPro" id="IPR008280">
    <property type="entry name" value="Tub_FtsZ_C"/>
</dbReference>
<dbReference type="InterPro" id="IPR000217">
    <property type="entry name" value="Tubulin"/>
</dbReference>
<dbReference type="InterPro" id="IPR037103">
    <property type="entry name" value="Tubulin/FtsZ-like_C"/>
</dbReference>
<dbReference type="InterPro" id="IPR018316">
    <property type="entry name" value="Tubulin/FtsZ_2-layer-sand-dom"/>
</dbReference>
<dbReference type="InterPro" id="IPR036525">
    <property type="entry name" value="Tubulin/FtsZ_GTPase_sf"/>
</dbReference>
<dbReference type="InterPro" id="IPR023123">
    <property type="entry name" value="Tubulin_C"/>
</dbReference>
<dbReference type="InterPro" id="IPR017975">
    <property type="entry name" value="Tubulin_CS"/>
</dbReference>
<dbReference type="InterPro" id="IPR003008">
    <property type="entry name" value="Tubulin_FtsZ_GTPase"/>
</dbReference>
<dbReference type="PANTHER" id="PTHR11588">
    <property type="entry name" value="TUBULIN"/>
    <property type="match status" value="1"/>
</dbReference>
<dbReference type="Pfam" id="PF00091">
    <property type="entry name" value="Tubulin"/>
    <property type="match status" value="1"/>
</dbReference>
<dbReference type="Pfam" id="PF03953">
    <property type="entry name" value="Tubulin_C"/>
    <property type="match status" value="1"/>
</dbReference>
<dbReference type="PRINTS" id="PR01162">
    <property type="entry name" value="ALPHATUBULIN"/>
</dbReference>
<dbReference type="PRINTS" id="PR01161">
    <property type="entry name" value="TUBULIN"/>
</dbReference>
<dbReference type="SMART" id="SM00864">
    <property type="entry name" value="Tubulin"/>
    <property type="match status" value="1"/>
</dbReference>
<dbReference type="SMART" id="SM00865">
    <property type="entry name" value="Tubulin_C"/>
    <property type="match status" value="1"/>
</dbReference>
<dbReference type="SUPFAM" id="SSF55307">
    <property type="entry name" value="Tubulin C-terminal domain-like"/>
    <property type="match status" value="1"/>
</dbReference>
<dbReference type="SUPFAM" id="SSF52490">
    <property type="entry name" value="Tubulin nucleotide-binding domain-like"/>
    <property type="match status" value="1"/>
</dbReference>
<dbReference type="PROSITE" id="PS00227">
    <property type="entry name" value="TUBULIN"/>
    <property type="match status" value="1"/>
</dbReference>